<evidence type="ECO:0000255" key="1">
    <source>
        <dbReference type="HAMAP-Rule" id="MF_01552"/>
    </source>
</evidence>
<name>RIMK_HAEIN</name>
<reference key="1">
    <citation type="journal article" date="1995" name="Science">
        <title>Whole-genome random sequencing and assembly of Haemophilus influenzae Rd.</title>
        <authorList>
            <person name="Fleischmann R.D."/>
            <person name="Adams M.D."/>
            <person name="White O."/>
            <person name="Clayton R.A."/>
            <person name="Kirkness E.F."/>
            <person name="Kerlavage A.R."/>
            <person name="Bult C.J."/>
            <person name="Tomb J.-F."/>
            <person name="Dougherty B.A."/>
            <person name="Merrick J.M."/>
            <person name="McKenney K."/>
            <person name="Sutton G.G."/>
            <person name="FitzHugh W."/>
            <person name="Fields C.A."/>
            <person name="Gocayne J.D."/>
            <person name="Scott J.D."/>
            <person name="Shirley R."/>
            <person name="Liu L.-I."/>
            <person name="Glodek A."/>
            <person name="Kelley J.M."/>
            <person name="Weidman J.F."/>
            <person name="Phillips C.A."/>
            <person name="Spriggs T."/>
            <person name="Hedblom E."/>
            <person name="Cotton M.D."/>
            <person name="Utterback T.R."/>
            <person name="Hanna M.C."/>
            <person name="Nguyen D.T."/>
            <person name="Saudek D.M."/>
            <person name="Brandon R.C."/>
            <person name="Fine L.D."/>
            <person name="Fritchman J.L."/>
            <person name="Fuhrmann J.L."/>
            <person name="Geoghagen N.S.M."/>
            <person name="Gnehm C.L."/>
            <person name="McDonald L.A."/>
            <person name="Small K.V."/>
            <person name="Fraser C.M."/>
            <person name="Smith H.O."/>
            <person name="Venter J.C."/>
        </authorList>
    </citation>
    <scope>NUCLEOTIDE SEQUENCE [LARGE SCALE GENOMIC DNA]</scope>
    <source>
        <strain>ATCC 51907 / DSM 11121 / KW20 / Rd</strain>
    </source>
</reference>
<dbReference type="EC" id="6.3.2.-" evidence="1"/>
<dbReference type="EMBL" id="L42023">
    <property type="protein sequence ID" value="AAC23177.1"/>
    <property type="molecule type" value="Genomic_DNA"/>
</dbReference>
<dbReference type="PIR" id="H64127">
    <property type="entry name" value="H64127"/>
</dbReference>
<dbReference type="RefSeq" id="NP_439680.1">
    <property type="nucleotide sequence ID" value="NC_000907.1"/>
</dbReference>
<dbReference type="SMR" id="P45241"/>
<dbReference type="STRING" id="71421.HI_1531"/>
<dbReference type="EnsemblBacteria" id="AAC23177">
    <property type="protein sequence ID" value="AAC23177"/>
    <property type="gene ID" value="HI_1531"/>
</dbReference>
<dbReference type="KEGG" id="hin:HI_1531"/>
<dbReference type="PATRIC" id="fig|71421.8.peg.1602"/>
<dbReference type="eggNOG" id="COG0189">
    <property type="taxonomic scope" value="Bacteria"/>
</dbReference>
<dbReference type="HOGENOM" id="CLU_054353_0_1_6"/>
<dbReference type="OrthoDB" id="3865600at2"/>
<dbReference type="PhylomeDB" id="P45241"/>
<dbReference type="BioCyc" id="HINF71421:G1GJ1-1553-MONOMER"/>
<dbReference type="Proteomes" id="UP000000579">
    <property type="component" value="Chromosome"/>
</dbReference>
<dbReference type="GO" id="GO:0005737">
    <property type="term" value="C:cytoplasm"/>
    <property type="evidence" value="ECO:0000318"/>
    <property type="project" value="GO_Central"/>
</dbReference>
<dbReference type="GO" id="GO:0005524">
    <property type="term" value="F:ATP binding"/>
    <property type="evidence" value="ECO:0007669"/>
    <property type="project" value="UniProtKB-UniRule"/>
</dbReference>
<dbReference type="GO" id="GO:0046872">
    <property type="term" value="F:metal ion binding"/>
    <property type="evidence" value="ECO:0007669"/>
    <property type="project" value="UniProtKB-KW"/>
</dbReference>
<dbReference type="GO" id="GO:0018169">
    <property type="term" value="F:ribosomal S6-glutamic acid ligase activity"/>
    <property type="evidence" value="ECO:0000318"/>
    <property type="project" value="GO_Central"/>
</dbReference>
<dbReference type="GO" id="GO:0036211">
    <property type="term" value="P:protein modification process"/>
    <property type="evidence" value="ECO:0007669"/>
    <property type="project" value="InterPro"/>
</dbReference>
<dbReference type="GO" id="GO:0009432">
    <property type="term" value="P:SOS response"/>
    <property type="evidence" value="ECO:0000318"/>
    <property type="project" value="GO_Central"/>
</dbReference>
<dbReference type="GO" id="GO:0006412">
    <property type="term" value="P:translation"/>
    <property type="evidence" value="ECO:0007669"/>
    <property type="project" value="UniProtKB-KW"/>
</dbReference>
<dbReference type="FunFam" id="3.30.470.20:FF:000058">
    <property type="entry name" value="Alpha-aminoadipate--LysW ligase LysX protein"/>
    <property type="match status" value="1"/>
</dbReference>
<dbReference type="FunFam" id="3.40.50.20:FF:000047">
    <property type="entry name" value="Probable alpha-L-glutamate ligase"/>
    <property type="match status" value="1"/>
</dbReference>
<dbReference type="Gene3D" id="3.40.50.20">
    <property type="match status" value="1"/>
</dbReference>
<dbReference type="Gene3D" id="3.30.1490.20">
    <property type="entry name" value="ATP-grasp fold, A domain"/>
    <property type="match status" value="1"/>
</dbReference>
<dbReference type="Gene3D" id="3.30.470.20">
    <property type="entry name" value="ATP-grasp fold, B domain"/>
    <property type="match status" value="1"/>
</dbReference>
<dbReference type="HAMAP" id="MF_01552">
    <property type="entry name" value="RimK"/>
    <property type="match status" value="1"/>
</dbReference>
<dbReference type="InterPro" id="IPR011761">
    <property type="entry name" value="ATP-grasp"/>
</dbReference>
<dbReference type="InterPro" id="IPR013651">
    <property type="entry name" value="ATP-grasp_RimK-type"/>
</dbReference>
<dbReference type="InterPro" id="IPR013815">
    <property type="entry name" value="ATP_grasp_subdomain_1"/>
</dbReference>
<dbReference type="InterPro" id="IPR023533">
    <property type="entry name" value="RimK"/>
</dbReference>
<dbReference type="InterPro" id="IPR041107">
    <property type="entry name" value="Rimk_N"/>
</dbReference>
<dbReference type="InterPro" id="IPR004666">
    <property type="entry name" value="Rp_bS6_RimK/Lys_biosynth_LsyX"/>
</dbReference>
<dbReference type="NCBIfam" id="TIGR00768">
    <property type="entry name" value="rimK_fam"/>
    <property type="match status" value="1"/>
</dbReference>
<dbReference type="PANTHER" id="PTHR21621:SF7">
    <property type="entry name" value="RIBOSOMAL PROTEIN BS6--L-GLUTAMATE LIGASE"/>
    <property type="match status" value="1"/>
</dbReference>
<dbReference type="PANTHER" id="PTHR21621">
    <property type="entry name" value="RIBOSOMAL PROTEIN S6 MODIFICATION PROTEIN"/>
    <property type="match status" value="1"/>
</dbReference>
<dbReference type="Pfam" id="PF08443">
    <property type="entry name" value="RimK"/>
    <property type="match status" value="1"/>
</dbReference>
<dbReference type="Pfam" id="PF18030">
    <property type="entry name" value="Rimk_N"/>
    <property type="match status" value="1"/>
</dbReference>
<dbReference type="SUPFAM" id="SSF56059">
    <property type="entry name" value="Glutathione synthetase ATP-binding domain-like"/>
    <property type="match status" value="1"/>
</dbReference>
<dbReference type="PROSITE" id="PS50975">
    <property type="entry name" value="ATP_GRASP"/>
    <property type="match status" value="1"/>
</dbReference>
<proteinExistence type="inferred from homology"/>
<accession>P45241</accession>
<keyword id="KW-0067">ATP-binding</keyword>
<keyword id="KW-0436">Ligase</keyword>
<keyword id="KW-0460">Magnesium</keyword>
<keyword id="KW-0464">Manganese</keyword>
<keyword id="KW-0479">Metal-binding</keyword>
<keyword id="KW-0547">Nucleotide-binding</keyword>
<keyword id="KW-0648">Protein biosynthesis</keyword>
<keyword id="KW-1185">Reference proteome</keyword>
<feature type="chain" id="PRO_0000205459" description="Probable alpha-L-glutamate ligase">
    <location>
        <begin position="1"/>
        <end position="302"/>
    </location>
</feature>
<feature type="domain" description="ATP-grasp" evidence="1">
    <location>
        <begin position="112"/>
        <end position="294"/>
    </location>
</feature>
<feature type="binding site" evidence="1">
    <location>
        <position position="148"/>
    </location>
    <ligand>
        <name>ATP</name>
        <dbReference type="ChEBI" id="CHEBI:30616"/>
    </ligand>
</feature>
<feature type="binding site" evidence="1">
    <location>
        <begin position="185"/>
        <end position="186"/>
    </location>
    <ligand>
        <name>ATP</name>
        <dbReference type="ChEBI" id="CHEBI:30616"/>
    </ligand>
</feature>
<feature type="binding site" evidence="1">
    <location>
        <position position="194"/>
    </location>
    <ligand>
        <name>ATP</name>
        <dbReference type="ChEBI" id="CHEBI:30616"/>
    </ligand>
</feature>
<feature type="binding site" evidence="1">
    <location>
        <begin position="218"/>
        <end position="220"/>
    </location>
    <ligand>
        <name>ATP</name>
        <dbReference type="ChEBI" id="CHEBI:30616"/>
    </ligand>
</feature>
<feature type="binding site" evidence="1">
    <location>
        <position position="255"/>
    </location>
    <ligand>
        <name>Mg(2+)</name>
        <dbReference type="ChEBI" id="CHEBI:18420"/>
        <label>1</label>
    </ligand>
</feature>
<feature type="binding site" evidence="1">
    <location>
        <position position="255"/>
    </location>
    <ligand>
        <name>Mn(2+)</name>
        <dbReference type="ChEBI" id="CHEBI:29035"/>
        <label>1</label>
    </ligand>
</feature>
<feature type="binding site" evidence="1">
    <location>
        <position position="267"/>
    </location>
    <ligand>
        <name>Mg(2+)</name>
        <dbReference type="ChEBI" id="CHEBI:18420"/>
        <label>1</label>
    </ligand>
</feature>
<feature type="binding site" evidence="1">
    <location>
        <position position="267"/>
    </location>
    <ligand>
        <name>Mg(2+)</name>
        <dbReference type="ChEBI" id="CHEBI:18420"/>
        <label>2</label>
    </ligand>
</feature>
<feature type="binding site" evidence="1">
    <location>
        <position position="267"/>
    </location>
    <ligand>
        <name>Mn(2+)</name>
        <dbReference type="ChEBI" id="CHEBI:29035"/>
        <label>1</label>
    </ligand>
</feature>
<feature type="binding site" evidence="1">
    <location>
        <position position="267"/>
    </location>
    <ligand>
        <name>Mn(2+)</name>
        <dbReference type="ChEBI" id="CHEBI:29035"/>
        <label>2</label>
    </ligand>
</feature>
<feature type="binding site" evidence="1">
    <location>
        <position position="269"/>
    </location>
    <ligand>
        <name>Mg(2+)</name>
        <dbReference type="ChEBI" id="CHEBI:18420"/>
        <label>2</label>
    </ligand>
</feature>
<feature type="binding site" evidence="1">
    <location>
        <position position="269"/>
    </location>
    <ligand>
        <name>Mn(2+)</name>
        <dbReference type="ChEBI" id="CHEBI:29035"/>
        <label>2</label>
    </ligand>
</feature>
<sequence>MKLLMLCREPRLYSCQRLKEAAKHQGHEMDILDPNHCFLKLSQNPPHFQIFYQENSESKPYLLSDYDAVLPRFGTTSTQMGCSVLQHFEGKGTFCLNSSQAFLNARDKWKSLQLLLKAGIPVPNSLLSGGEVQAQATIPHISSPTILKTLNGSQGIGVILAEKPQSAVSIMEAFKQTNISMLQQDFIEEAGNADIRCFVIGDQVVATMQRIGQNGEFRANCHRGGKTEKITLSDEEKQIAIQATKAIGLDVAGVDLIRSKKGLLVLEVNASPGLEMIEKTSGIDIAAEIIDYIEINAFINSR</sequence>
<comment type="cofactor">
    <cofactor evidence="1">
        <name>Mg(2+)</name>
        <dbReference type="ChEBI" id="CHEBI:18420"/>
    </cofactor>
    <cofactor evidence="1">
        <name>Mn(2+)</name>
        <dbReference type="ChEBI" id="CHEBI:29035"/>
    </cofactor>
    <text evidence="1">Binds 2 magnesium or manganese ions per subunit.</text>
</comment>
<comment type="similarity">
    <text evidence="1">Belongs to the RimK family.</text>
</comment>
<protein>
    <recommendedName>
        <fullName evidence="1">Probable alpha-L-glutamate ligase</fullName>
        <ecNumber evidence="1">6.3.2.-</ecNumber>
    </recommendedName>
</protein>
<organism>
    <name type="scientific">Haemophilus influenzae (strain ATCC 51907 / DSM 11121 / KW20 / Rd)</name>
    <dbReference type="NCBI Taxonomy" id="71421"/>
    <lineage>
        <taxon>Bacteria</taxon>
        <taxon>Pseudomonadati</taxon>
        <taxon>Pseudomonadota</taxon>
        <taxon>Gammaproteobacteria</taxon>
        <taxon>Pasteurellales</taxon>
        <taxon>Pasteurellaceae</taxon>
        <taxon>Haemophilus</taxon>
    </lineage>
</organism>
<gene>
    <name evidence="1" type="primary">rimK</name>
    <name type="ordered locus">HI_1531</name>
</gene>